<organism>
    <name type="scientific">Cronobacter sakazakii (strain ATCC BAA-894)</name>
    <name type="common">Enterobacter sakazakii</name>
    <dbReference type="NCBI Taxonomy" id="290339"/>
    <lineage>
        <taxon>Bacteria</taxon>
        <taxon>Pseudomonadati</taxon>
        <taxon>Pseudomonadota</taxon>
        <taxon>Gammaproteobacteria</taxon>
        <taxon>Enterobacterales</taxon>
        <taxon>Enterobacteriaceae</taxon>
        <taxon>Cronobacter</taxon>
    </lineage>
</organism>
<gene>
    <name evidence="1" type="primary">selD</name>
    <name type="ordered locus">ESA_02162</name>
</gene>
<accession>A7MNU8</accession>
<sequence>MSEQAIRLTQYSHGAGCGCKISPKVLETILHSDQAKFIDPNLLVGNETRDDAAVYDLGNGTSVISTTDFFMPIVDNPFDFGRIAATNAISDIYAMGGKPIMAIAILGWPVNTLAPEIAREVVEGGRFACQQAGIALAGGHSIDAPEPIFGLAVTGVVPTERVKKNSTAEAGCKLFLTKPLGIGVLTTAEKKSLLRPEHQNLATEVMCTMNKAGADFAEIDGVRAMTDVTGFGLLGHLSEVCQGAGLQAELWYEAVPKLPGVEEYIAQGAVPGGTSRNFASYGHLMGDMPDAWRSLLCDPQTSGGLLLAVEPAAEAQVQAVAAKHGITLSAIGELKTARGGRPMVEIR</sequence>
<name>SELD_CROS8</name>
<protein>
    <recommendedName>
        <fullName evidence="1">Selenide, water dikinase</fullName>
        <ecNumber evidence="1">2.7.9.3</ecNumber>
    </recommendedName>
    <alternativeName>
        <fullName evidence="1">Selenium donor protein</fullName>
    </alternativeName>
    <alternativeName>
        <fullName evidence="1">Selenophosphate synthase</fullName>
    </alternativeName>
</protein>
<dbReference type="EC" id="2.7.9.3" evidence="1"/>
<dbReference type="EMBL" id="CP000783">
    <property type="protein sequence ID" value="ABU77411.1"/>
    <property type="molecule type" value="Genomic_DNA"/>
</dbReference>
<dbReference type="RefSeq" id="WP_012125024.1">
    <property type="nucleotide sequence ID" value="NC_009778.1"/>
</dbReference>
<dbReference type="SMR" id="A7MNU8"/>
<dbReference type="KEGG" id="esa:ESA_02162"/>
<dbReference type="PATRIC" id="fig|290339.8.peg.1934"/>
<dbReference type="HOGENOM" id="CLU_032859_0_1_6"/>
<dbReference type="Proteomes" id="UP000000260">
    <property type="component" value="Chromosome"/>
</dbReference>
<dbReference type="GO" id="GO:0005737">
    <property type="term" value="C:cytoplasm"/>
    <property type="evidence" value="ECO:0007669"/>
    <property type="project" value="TreeGrafter"/>
</dbReference>
<dbReference type="GO" id="GO:0005524">
    <property type="term" value="F:ATP binding"/>
    <property type="evidence" value="ECO:0007669"/>
    <property type="project" value="UniProtKB-UniRule"/>
</dbReference>
<dbReference type="GO" id="GO:0000287">
    <property type="term" value="F:magnesium ion binding"/>
    <property type="evidence" value="ECO:0007669"/>
    <property type="project" value="UniProtKB-UniRule"/>
</dbReference>
<dbReference type="GO" id="GO:0004756">
    <property type="term" value="F:selenide, water dikinase activity"/>
    <property type="evidence" value="ECO:0007669"/>
    <property type="project" value="UniProtKB-UniRule"/>
</dbReference>
<dbReference type="GO" id="GO:0016260">
    <property type="term" value="P:selenocysteine biosynthetic process"/>
    <property type="evidence" value="ECO:0007669"/>
    <property type="project" value="InterPro"/>
</dbReference>
<dbReference type="CDD" id="cd02195">
    <property type="entry name" value="SelD"/>
    <property type="match status" value="1"/>
</dbReference>
<dbReference type="FunFam" id="3.30.1330.10:FF:000003">
    <property type="entry name" value="Selenide, water dikinase"/>
    <property type="match status" value="1"/>
</dbReference>
<dbReference type="FunFam" id="3.90.650.10:FF:000004">
    <property type="entry name" value="Selenide, water dikinase"/>
    <property type="match status" value="1"/>
</dbReference>
<dbReference type="Gene3D" id="3.90.650.10">
    <property type="entry name" value="PurM-like C-terminal domain"/>
    <property type="match status" value="1"/>
</dbReference>
<dbReference type="Gene3D" id="3.30.1330.10">
    <property type="entry name" value="PurM-like, N-terminal domain"/>
    <property type="match status" value="1"/>
</dbReference>
<dbReference type="HAMAP" id="MF_00625">
    <property type="entry name" value="SelD"/>
    <property type="match status" value="1"/>
</dbReference>
<dbReference type="InterPro" id="IPR010918">
    <property type="entry name" value="PurM-like_C_dom"/>
</dbReference>
<dbReference type="InterPro" id="IPR036676">
    <property type="entry name" value="PurM-like_C_sf"/>
</dbReference>
<dbReference type="InterPro" id="IPR016188">
    <property type="entry name" value="PurM-like_N"/>
</dbReference>
<dbReference type="InterPro" id="IPR036921">
    <property type="entry name" value="PurM-like_N_sf"/>
</dbReference>
<dbReference type="InterPro" id="IPR023061">
    <property type="entry name" value="SelD_I"/>
</dbReference>
<dbReference type="InterPro" id="IPR004536">
    <property type="entry name" value="SPS/SelD"/>
</dbReference>
<dbReference type="NCBIfam" id="NF002098">
    <property type="entry name" value="PRK00943.1"/>
    <property type="match status" value="1"/>
</dbReference>
<dbReference type="NCBIfam" id="TIGR00476">
    <property type="entry name" value="selD"/>
    <property type="match status" value="1"/>
</dbReference>
<dbReference type="PANTHER" id="PTHR10256:SF0">
    <property type="entry name" value="INACTIVE SELENIDE, WATER DIKINASE-LIKE PROTEIN-RELATED"/>
    <property type="match status" value="1"/>
</dbReference>
<dbReference type="PANTHER" id="PTHR10256">
    <property type="entry name" value="SELENIDE, WATER DIKINASE"/>
    <property type="match status" value="1"/>
</dbReference>
<dbReference type="Pfam" id="PF00586">
    <property type="entry name" value="AIRS"/>
    <property type="match status" value="1"/>
</dbReference>
<dbReference type="Pfam" id="PF02769">
    <property type="entry name" value="AIRS_C"/>
    <property type="match status" value="1"/>
</dbReference>
<dbReference type="PIRSF" id="PIRSF036407">
    <property type="entry name" value="Selenphspht_syn"/>
    <property type="match status" value="1"/>
</dbReference>
<dbReference type="SUPFAM" id="SSF56042">
    <property type="entry name" value="PurM C-terminal domain-like"/>
    <property type="match status" value="1"/>
</dbReference>
<dbReference type="SUPFAM" id="SSF55326">
    <property type="entry name" value="PurM N-terminal domain-like"/>
    <property type="match status" value="1"/>
</dbReference>
<feature type="chain" id="PRO_0000318672" description="Selenide, water dikinase">
    <location>
        <begin position="1"/>
        <end position="347"/>
    </location>
</feature>
<feature type="active site" evidence="1">
    <location>
        <position position="17"/>
    </location>
</feature>
<feature type="binding site" description="in other chain" evidence="1">
    <location>
        <position position="20"/>
    </location>
    <ligand>
        <name>ATP</name>
        <dbReference type="ChEBI" id="CHEBI:30616"/>
        <note>ligand shared between dimeric partners</note>
    </ligand>
</feature>
<feature type="binding site" description="in other chain" evidence="1">
    <location>
        <begin position="48"/>
        <end position="50"/>
    </location>
    <ligand>
        <name>ATP</name>
        <dbReference type="ChEBI" id="CHEBI:30616"/>
        <note>ligand shared between dimeric partners</note>
    </ligand>
</feature>
<feature type="binding site" evidence="1">
    <location>
        <position position="51"/>
    </location>
    <ligand>
        <name>Mg(2+)</name>
        <dbReference type="ChEBI" id="CHEBI:18420"/>
    </ligand>
</feature>
<feature type="binding site" description="in other chain" evidence="1">
    <location>
        <position position="68"/>
    </location>
    <ligand>
        <name>ATP</name>
        <dbReference type="ChEBI" id="CHEBI:30616"/>
        <note>ligand shared between dimeric partners</note>
    </ligand>
</feature>
<feature type="binding site" description="in other chain" evidence="1">
    <location>
        <position position="91"/>
    </location>
    <ligand>
        <name>ATP</name>
        <dbReference type="ChEBI" id="CHEBI:30616"/>
        <note>ligand shared between dimeric partners</note>
    </ligand>
</feature>
<feature type="binding site" evidence="1">
    <location>
        <position position="91"/>
    </location>
    <ligand>
        <name>Mg(2+)</name>
        <dbReference type="ChEBI" id="CHEBI:18420"/>
    </ligand>
</feature>
<feature type="binding site" evidence="1">
    <location>
        <begin position="139"/>
        <end position="141"/>
    </location>
    <ligand>
        <name>ATP</name>
        <dbReference type="ChEBI" id="CHEBI:30616"/>
        <note>ligand shared between dimeric partners</note>
    </ligand>
</feature>
<feature type="binding site" evidence="1">
    <location>
        <position position="227"/>
    </location>
    <ligand>
        <name>Mg(2+)</name>
        <dbReference type="ChEBI" id="CHEBI:18420"/>
    </ligand>
</feature>
<feature type="site" description="Important for catalytic activity" evidence="1">
    <location>
        <position position="20"/>
    </location>
</feature>
<comment type="function">
    <text evidence="1">Synthesizes selenophosphate from selenide and ATP.</text>
</comment>
<comment type="catalytic activity">
    <reaction evidence="1">
        <text>hydrogenselenide + ATP + H2O = selenophosphate + AMP + phosphate + 2 H(+)</text>
        <dbReference type="Rhea" id="RHEA:18737"/>
        <dbReference type="ChEBI" id="CHEBI:15377"/>
        <dbReference type="ChEBI" id="CHEBI:15378"/>
        <dbReference type="ChEBI" id="CHEBI:16144"/>
        <dbReference type="ChEBI" id="CHEBI:29317"/>
        <dbReference type="ChEBI" id="CHEBI:30616"/>
        <dbReference type="ChEBI" id="CHEBI:43474"/>
        <dbReference type="ChEBI" id="CHEBI:456215"/>
        <dbReference type="EC" id="2.7.9.3"/>
    </reaction>
</comment>
<comment type="cofactor">
    <cofactor evidence="1">
        <name>Mg(2+)</name>
        <dbReference type="ChEBI" id="CHEBI:18420"/>
    </cofactor>
    <text evidence="1">Binds 1 Mg(2+) ion per monomer.</text>
</comment>
<comment type="subunit">
    <text evidence="1">Homodimer.</text>
</comment>
<comment type="similarity">
    <text evidence="1">Belongs to the selenophosphate synthase 1 family. Class I subfamily.</text>
</comment>
<evidence type="ECO:0000255" key="1">
    <source>
        <dbReference type="HAMAP-Rule" id="MF_00625"/>
    </source>
</evidence>
<reference key="1">
    <citation type="journal article" date="2010" name="PLoS ONE">
        <title>Genome sequence of Cronobacter sakazakii BAA-894 and comparative genomic hybridization analysis with other Cronobacter species.</title>
        <authorList>
            <person name="Kucerova E."/>
            <person name="Clifton S.W."/>
            <person name="Xia X.Q."/>
            <person name="Long F."/>
            <person name="Porwollik S."/>
            <person name="Fulton L."/>
            <person name="Fronick C."/>
            <person name="Minx P."/>
            <person name="Kyung K."/>
            <person name="Warren W."/>
            <person name="Fulton R."/>
            <person name="Feng D."/>
            <person name="Wollam A."/>
            <person name="Shah N."/>
            <person name="Bhonagiri V."/>
            <person name="Nash W.E."/>
            <person name="Hallsworth-Pepin K."/>
            <person name="Wilson R.K."/>
            <person name="McClelland M."/>
            <person name="Forsythe S.J."/>
        </authorList>
    </citation>
    <scope>NUCLEOTIDE SEQUENCE [LARGE SCALE GENOMIC DNA]</scope>
    <source>
        <strain>ATCC BAA-894</strain>
    </source>
</reference>
<proteinExistence type="inferred from homology"/>
<keyword id="KW-0067">ATP-binding</keyword>
<keyword id="KW-0418">Kinase</keyword>
<keyword id="KW-0460">Magnesium</keyword>
<keyword id="KW-0479">Metal-binding</keyword>
<keyword id="KW-0547">Nucleotide-binding</keyword>
<keyword id="KW-1185">Reference proteome</keyword>
<keyword id="KW-0711">Selenium</keyword>
<keyword id="KW-0808">Transferase</keyword>